<evidence type="ECO:0000255" key="1">
    <source>
        <dbReference type="HAMAP-Rule" id="MF_01321"/>
    </source>
</evidence>
<evidence type="ECO:0000256" key="2">
    <source>
        <dbReference type="SAM" id="MobiDB-lite"/>
    </source>
</evidence>
<gene>
    <name evidence="1" type="primary">rpoB</name>
    <name type="ordered locus">Athe_0804</name>
</gene>
<organism>
    <name type="scientific">Caldicellulosiruptor bescii (strain ATCC BAA-1888 / DSM 6725 / KCTC 15123 / Z-1320)</name>
    <name type="common">Anaerocellum thermophilum</name>
    <dbReference type="NCBI Taxonomy" id="521460"/>
    <lineage>
        <taxon>Bacteria</taxon>
        <taxon>Bacillati</taxon>
        <taxon>Bacillota</taxon>
        <taxon>Bacillota incertae sedis</taxon>
        <taxon>Caldicellulosiruptorales</taxon>
        <taxon>Caldicellulosiruptoraceae</taxon>
        <taxon>Caldicellulosiruptor</taxon>
    </lineage>
</organism>
<name>RPOB_CALBD</name>
<proteinExistence type="inferred from homology"/>
<accession>B9MQG5</accession>
<sequence length="1228" mass="138420">MALPRPVQYGKVQRMSYGKVKEVLDLPYLLEIQKKSFQWFLDEGLREVLREISPIKDYSETLLLEFVDYYFDGPPKYSEQECKERDATYARPLKVKVRLINKETGEIKEQDIYMGEFPIMTETGTFIINGAERVIVSQLIRSPGCYFASSIDKQGRKIFSGTLIPNRGAWLEFETDASELLSVRLDRTRKVSLTTLLKAFGLYNQQLIFEKFGEDERLKASLEKEANKGELGNPVENALLEVYRRLRPGEPPNVENARNLLYSMFFDPRRYDLAKVGRYKFNKKLSLWKRIFNKRAAQDVVDPKTGEILVKEGELITREIATQIQDAGVNEVWVYADEERPFKVVGNNTVKLDRYVEFDVSDINIKELVYRPVLDDILNTTNDVLEIKRLIKERERELVPYCLTIDDIFAATSYFLGLKYGIGTTDDIDHLGNRRVRAVGELLQNQFRIGLARMERVIRERMNIHDIDTVTPQTLINIRPVTAAIKEFFGSSPLSQFMDQVNPLAALTNKRRLSALGPGGLSRDRAGFEVRDVHHSHYGRMCPIETPEGPNIGLITSLATYARVNEYGFLETPYRKVDKKEARVTNEVVYLTADEEDTYKIAQATEPVDEEGRFINQRVTVRFGEEIIEVDKHEVDLIDISPKQIVSVSTSLIPFLENDDANRALMGSNMQRQAVPLLMTESPIIGTGVEYRAAVDSGVCILAKKDGVVENVSADEIVIRNNDGTKDVYHLLKFKRTNQGTCFNQRPIVRKGQEVKAGEVIADGPSTDHGELALGKNVLVAFMPWEGYNYEDAILISERLVKEDVYTSIHIEEYECEARDTKLGPEEITRDIPNVGEDAIKDLDERGIIRIGAEVKSGDILVGKVTPKGETELTAEERLLRAIFGEKARETRDTSLRVPHGEGGIVVDVKVFSRDKGDELPPGVNQLVRVYVAQKRKISVGDKMAGRHGNKGVISRILPVEDMPFLPDGTPVDIVLNPLGVPSRMNIGQILETHLGYAAKALGWKVATPVFDGAKEEDIEEALKLAGLNPTGKTILYDGRTGEPFDNEVTVGYMYMLKLVHLVDDKIHARSTGPYSLVTQQPLGGKAQFGGQRFGEMEVWALEAYGAAYTLQELLTVKSDDVTGRVKTYEAIVKGENIPEPGIPESFKVLVKELQSLCLDVKLLSEDNKEIELKESVDEDEQPQGLGAFEIGGDEIEEDKEDDKEKFYEDLMNATQEDDQGEIDDIDE</sequence>
<protein>
    <recommendedName>
        <fullName evidence="1">DNA-directed RNA polymerase subunit beta</fullName>
        <shortName evidence="1">RNAP subunit beta</shortName>
        <ecNumber evidence="1">2.7.7.6</ecNumber>
    </recommendedName>
    <alternativeName>
        <fullName evidence="1">RNA polymerase subunit beta</fullName>
    </alternativeName>
    <alternativeName>
        <fullName evidence="1">Transcriptase subunit beta</fullName>
    </alternativeName>
</protein>
<keyword id="KW-0240">DNA-directed RNA polymerase</keyword>
<keyword id="KW-0548">Nucleotidyltransferase</keyword>
<keyword id="KW-0804">Transcription</keyword>
<keyword id="KW-0808">Transferase</keyword>
<reference key="1">
    <citation type="submission" date="2009-01" db="EMBL/GenBank/DDBJ databases">
        <title>Complete sequence of chromosome of Caldicellulosiruptor becscii DSM 6725.</title>
        <authorList>
            <person name="Lucas S."/>
            <person name="Copeland A."/>
            <person name="Lapidus A."/>
            <person name="Glavina del Rio T."/>
            <person name="Tice H."/>
            <person name="Bruce D."/>
            <person name="Goodwin L."/>
            <person name="Pitluck S."/>
            <person name="Sims D."/>
            <person name="Meincke L."/>
            <person name="Brettin T."/>
            <person name="Detter J.C."/>
            <person name="Han C."/>
            <person name="Larimer F."/>
            <person name="Land M."/>
            <person name="Hauser L."/>
            <person name="Kyrpides N."/>
            <person name="Ovchinnikova G."/>
            <person name="Kataeva I."/>
            <person name="Adams M.W.W."/>
        </authorList>
    </citation>
    <scope>NUCLEOTIDE SEQUENCE [LARGE SCALE GENOMIC DNA]</scope>
    <source>
        <strain>ATCC BAA-1888 / DSM 6725 / KCTC 15123 / Z-1320</strain>
    </source>
</reference>
<dbReference type="EC" id="2.7.7.6" evidence="1"/>
<dbReference type="EMBL" id="CP001393">
    <property type="protein sequence ID" value="ACM59919.1"/>
    <property type="molecule type" value="Genomic_DNA"/>
</dbReference>
<dbReference type="SMR" id="B9MQG5"/>
<dbReference type="STRING" id="521460.Athe_0804"/>
<dbReference type="KEGG" id="ate:Athe_0804"/>
<dbReference type="eggNOG" id="COG0085">
    <property type="taxonomic scope" value="Bacteria"/>
</dbReference>
<dbReference type="HOGENOM" id="CLU_000524_4_0_9"/>
<dbReference type="Proteomes" id="UP000007723">
    <property type="component" value="Chromosome"/>
</dbReference>
<dbReference type="GO" id="GO:0000428">
    <property type="term" value="C:DNA-directed RNA polymerase complex"/>
    <property type="evidence" value="ECO:0007669"/>
    <property type="project" value="UniProtKB-KW"/>
</dbReference>
<dbReference type="GO" id="GO:0003677">
    <property type="term" value="F:DNA binding"/>
    <property type="evidence" value="ECO:0007669"/>
    <property type="project" value="UniProtKB-UniRule"/>
</dbReference>
<dbReference type="GO" id="GO:0003899">
    <property type="term" value="F:DNA-directed RNA polymerase activity"/>
    <property type="evidence" value="ECO:0007669"/>
    <property type="project" value="UniProtKB-UniRule"/>
</dbReference>
<dbReference type="GO" id="GO:0032549">
    <property type="term" value="F:ribonucleoside binding"/>
    <property type="evidence" value="ECO:0007669"/>
    <property type="project" value="InterPro"/>
</dbReference>
<dbReference type="GO" id="GO:0006351">
    <property type="term" value="P:DNA-templated transcription"/>
    <property type="evidence" value="ECO:0007669"/>
    <property type="project" value="UniProtKB-UniRule"/>
</dbReference>
<dbReference type="CDD" id="cd00653">
    <property type="entry name" value="RNA_pol_B_RPB2"/>
    <property type="match status" value="1"/>
</dbReference>
<dbReference type="FunFam" id="3.90.1800.10:FF:000001">
    <property type="entry name" value="DNA-directed RNA polymerase subunit beta"/>
    <property type="match status" value="1"/>
</dbReference>
<dbReference type="Gene3D" id="2.40.50.100">
    <property type="match status" value="1"/>
</dbReference>
<dbReference type="Gene3D" id="2.40.50.150">
    <property type="match status" value="1"/>
</dbReference>
<dbReference type="Gene3D" id="3.90.1100.10">
    <property type="match status" value="1"/>
</dbReference>
<dbReference type="Gene3D" id="2.30.150.10">
    <property type="entry name" value="DNA-directed RNA polymerase, beta subunit, external 1 domain"/>
    <property type="match status" value="1"/>
</dbReference>
<dbReference type="Gene3D" id="2.40.270.10">
    <property type="entry name" value="DNA-directed RNA polymerase, subunit 2, domain 6"/>
    <property type="match status" value="1"/>
</dbReference>
<dbReference type="Gene3D" id="3.90.1800.10">
    <property type="entry name" value="RNA polymerase alpha subunit dimerisation domain"/>
    <property type="match status" value="1"/>
</dbReference>
<dbReference type="Gene3D" id="3.90.1110.10">
    <property type="entry name" value="RNA polymerase Rpb2, domain 2"/>
    <property type="match status" value="1"/>
</dbReference>
<dbReference type="HAMAP" id="MF_01321">
    <property type="entry name" value="RNApol_bact_RpoB"/>
    <property type="match status" value="1"/>
</dbReference>
<dbReference type="InterPro" id="IPR042107">
    <property type="entry name" value="DNA-dir_RNA_pol_bsu_ext_1_sf"/>
</dbReference>
<dbReference type="InterPro" id="IPR019462">
    <property type="entry name" value="DNA-dir_RNA_pol_bsu_external_1"/>
</dbReference>
<dbReference type="InterPro" id="IPR015712">
    <property type="entry name" value="DNA-dir_RNA_pol_su2"/>
</dbReference>
<dbReference type="InterPro" id="IPR007120">
    <property type="entry name" value="DNA-dir_RNAP_su2_dom"/>
</dbReference>
<dbReference type="InterPro" id="IPR037033">
    <property type="entry name" value="DNA-dir_RNAP_su2_hyb_sf"/>
</dbReference>
<dbReference type="InterPro" id="IPR010243">
    <property type="entry name" value="RNA_pol_bsu_bac"/>
</dbReference>
<dbReference type="InterPro" id="IPR007121">
    <property type="entry name" value="RNA_pol_bsu_CS"/>
</dbReference>
<dbReference type="InterPro" id="IPR007644">
    <property type="entry name" value="RNA_pol_bsu_protrusion"/>
</dbReference>
<dbReference type="InterPro" id="IPR007642">
    <property type="entry name" value="RNA_pol_Rpb2_2"/>
</dbReference>
<dbReference type="InterPro" id="IPR037034">
    <property type="entry name" value="RNA_pol_Rpb2_2_sf"/>
</dbReference>
<dbReference type="InterPro" id="IPR007645">
    <property type="entry name" value="RNA_pol_Rpb2_3"/>
</dbReference>
<dbReference type="InterPro" id="IPR007641">
    <property type="entry name" value="RNA_pol_Rpb2_7"/>
</dbReference>
<dbReference type="InterPro" id="IPR014724">
    <property type="entry name" value="RNA_pol_RPB2_OB-fold"/>
</dbReference>
<dbReference type="NCBIfam" id="NF001616">
    <property type="entry name" value="PRK00405.1"/>
    <property type="match status" value="1"/>
</dbReference>
<dbReference type="NCBIfam" id="TIGR02013">
    <property type="entry name" value="rpoB"/>
    <property type="match status" value="1"/>
</dbReference>
<dbReference type="PANTHER" id="PTHR20856">
    <property type="entry name" value="DNA-DIRECTED RNA POLYMERASE I SUBUNIT 2"/>
    <property type="match status" value="1"/>
</dbReference>
<dbReference type="Pfam" id="PF04563">
    <property type="entry name" value="RNA_pol_Rpb2_1"/>
    <property type="match status" value="1"/>
</dbReference>
<dbReference type="Pfam" id="PF04561">
    <property type="entry name" value="RNA_pol_Rpb2_2"/>
    <property type="match status" value="2"/>
</dbReference>
<dbReference type="Pfam" id="PF04565">
    <property type="entry name" value="RNA_pol_Rpb2_3"/>
    <property type="match status" value="1"/>
</dbReference>
<dbReference type="Pfam" id="PF10385">
    <property type="entry name" value="RNA_pol_Rpb2_45"/>
    <property type="match status" value="1"/>
</dbReference>
<dbReference type="Pfam" id="PF00562">
    <property type="entry name" value="RNA_pol_Rpb2_6"/>
    <property type="match status" value="1"/>
</dbReference>
<dbReference type="Pfam" id="PF04560">
    <property type="entry name" value="RNA_pol_Rpb2_7"/>
    <property type="match status" value="1"/>
</dbReference>
<dbReference type="SUPFAM" id="SSF64484">
    <property type="entry name" value="beta and beta-prime subunits of DNA dependent RNA-polymerase"/>
    <property type="match status" value="1"/>
</dbReference>
<dbReference type="PROSITE" id="PS01166">
    <property type="entry name" value="RNA_POL_BETA"/>
    <property type="match status" value="1"/>
</dbReference>
<comment type="function">
    <text evidence="1">DNA-dependent RNA polymerase catalyzes the transcription of DNA into RNA using the four ribonucleoside triphosphates as substrates.</text>
</comment>
<comment type="catalytic activity">
    <reaction evidence="1">
        <text>RNA(n) + a ribonucleoside 5'-triphosphate = RNA(n+1) + diphosphate</text>
        <dbReference type="Rhea" id="RHEA:21248"/>
        <dbReference type="Rhea" id="RHEA-COMP:14527"/>
        <dbReference type="Rhea" id="RHEA-COMP:17342"/>
        <dbReference type="ChEBI" id="CHEBI:33019"/>
        <dbReference type="ChEBI" id="CHEBI:61557"/>
        <dbReference type="ChEBI" id="CHEBI:140395"/>
        <dbReference type="EC" id="2.7.7.6"/>
    </reaction>
</comment>
<comment type="subunit">
    <text evidence="1">The RNAP catalytic core consists of 2 alpha, 1 beta, 1 beta' and 1 omega subunit. When a sigma factor is associated with the core the holoenzyme is formed, which can initiate transcription.</text>
</comment>
<comment type="similarity">
    <text evidence="1">Belongs to the RNA polymerase beta chain family.</text>
</comment>
<feature type="chain" id="PRO_1000165785" description="DNA-directed RNA polymerase subunit beta">
    <location>
        <begin position="1"/>
        <end position="1228"/>
    </location>
</feature>
<feature type="region of interest" description="Disordered" evidence="2">
    <location>
        <begin position="1175"/>
        <end position="1204"/>
    </location>
</feature>
<feature type="compositionally biased region" description="Acidic residues" evidence="2">
    <location>
        <begin position="1192"/>
        <end position="1202"/>
    </location>
</feature>